<evidence type="ECO:0000255" key="1">
    <source>
        <dbReference type="HAMAP-Rule" id="MF_00080"/>
    </source>
</evidence>
<evidence type="ECO:0000256" key="2">
    <source>
        <dbReference type="SAM" id="MobiDB-lite"/>
    </source>
</evidence>
<protein>
    <recommendedName>
        <fullName evidence="1">Translation initiation factor IF-3</fullName>
    </recommendedName>
</protein>
<organism>
    <name type="scientific">Prochlorococcus marinus (strain NATL1A)</name>
    <dbReference type="NCBI Taxonomy" id="167555"/>
    <lineage>
        <taxon>Bacteria</taxon>
        <taxon>Bacillati</taxon>
        <taxon>Cyanobacteriota</taxon>
        <taxon>Cyanophyceae</taxon>
        <taxon>Synechococcales</taxon>
        <taxon>Prochlorococcaceae</taxon>
        <taxon>Prochlorococcus</taxon>
    </lineage>
</organism>
<feature type="chain" id="PRO_1000004553" description="Translation initiation factor IF-3">
    <location>
        <begin position="1"/>
        <end position="202"/>
    </location>
</feature>
<feature type="region of interest" description="Disordered" evidence="2">
    <location>
        <begin position="178"/>
        <end position="202"/>
    </location>
</feature>
<feature type="compositionally biased region" description="Basic and acidic residues" evidence="2">
    <location>
        <begin position="185"/>
        <end position="196"/>
    </location>
</feature>
<gene>
    <name evidence="1" type="primary">infC</name>
    <name type="ordered locus">NATL1_20901</name>
</gene>
<sequence length="202" mass="23533">MPPRPRFDRHAPERELPNINERISYSSLRVVDSDGTQLGVISREEALEVAKERELDLVLVSEKATPPVCRIMNYGKFKFEQEKKAKEAKKKSHQTEVKEVKMRYKIDQHDYQVRISQATRFLKAGDKVKCTVIFRGREIQHTALAETLLKRMSKDLEEKAEVQQSPKREGRNMIMFLTPRKTPLLKKESETTEPKKALRSIN</sequence>
<name>IF3_PROM1</name>
<dbReference type="EMBL" id="CP000553">
    <property type="protein sequence ID" value="ABM76646.1"/>
    <property type="molecule type" value="Genomic_DNA"/>
</dbReference>
<dbReference type="RefSeq" id="WP_011824590.1">
    <property type="nucleotide sequence ID" value="NC_008819.1"/>
</dbReference>
<dbReference type="SMR" id="A2C586"/>
<dbReference type="KEGG" id="pme:NATL1_20901"/>
<dbReference type="eggNOG" id="COG0290">
    <property type="taxonomic scope" value="Bacteria"/>
</dbReference>
<dbReference type="HOGENOM" id="CLU_054919_3_2_3"/>
<dbReference type="Proteomes" id="UP000002592">
    <property type="component" value="Chromosome"/>
</dbReference>
<dbReference type="GO" id="GO:0005829">
    <property type="term" value="C:cytosol"/>
    <property type="evidence" value="ECO:0007669"/>
    <property type="project" value="TreeGrafter"/>
</dbReference>
<dbReference type="GO" id="GO:0016020">
    <property type="term" value="C:membrane"/>
    <property type="evidence" value="ECO:0007669"/>
    <property type="project" value="TreeGrafter"/>
</dbReference>
<dbReference type="GO" id="GO:0043022">
    <property type="term" value="F:ribosome binding"/>
    <property type="evidence" value="ECO:0007669"/>
    <property type="project" value="TreeGrafter"/>
</dbReference>
<dbReference type="GO" id="GO:0003743">
    <property type="term" value="F:translation initiation factor activity"/>
    <property type="evidence" value="ECO:0007669"/>
    <property type="project" value="UniProtKB-UniRule"/>
</dbReference>
<dbReference type="GO" id="GO:0032790">
    <property type="term" value="P:ribosome disassembly"/>
    <property type="evidence" value="ECO:0007669"/>
    <property type="project" value="TreeGrafter"/>
</dbReference>
<dbReference type="FunFam" id="3.10.20.80:FF:000001">
    <property type="entry name" value="Translation initiation factor IF-3"/>
    <property type="match status" value="1"/>
</dbReference>
<dbReference type="FunFam" id="3.30.110.10:FF:000001">
    <property type="entry name" value="Translation initiation factor IF-3"/>
    <property type="match status" value="1"/>
</dbReference>
<dbReference type="Gene3D" id="3.30.110.10">
    <property type="entry name" value="Translation initiation factor 3 (IF-3), C-terminal domain"/>
    <property type="match status" value="1"/>
</dbReference>
<dbReference type="Gene3D" id="3.10.20.80">
    <property type="entry name" value="Translation initiation factor 3 (IF-3), N-terminal domain"/>
    <property type="match status" value="1"/>
</dbReference>
<dbReference type="HAMAP" id="MF_00080">
    <property type="entry name" value="IF_3"/>
    <property type="match status" value="1"/>
</dbReference>
<dbReference type="InterPro" id="IPR036788">
    <property type="entry name" value="T_IF-3_C_sf"/>
</dbReference>
<dbReference type="InterPro" id="IPR036787">
    <property type="entry name" value="T_IF-3_N_sf"/>
</dbReference>
<dbReference type="InterPro" id="IPR019813">
    <property type="entry name" value="Translation_initiation_fac3_CS"/>
</dbReference>
<dbReference type="InterPro" id="IPR001288">
    <property type="entry name" value="Translation_initiation_fac_3"/>
</dbReference>
<dbReference type="InterPro" id="IPR019815">
    <property type="entry name" value="Translation_initiation_fac_3_C"/>
</dbReference>
<dbReference type="InterPro" id="IPR019814">
    <property type="entry name" value="Translation_initiation_fac_3_N"/>
</dbReference>
<dbReference type="NCBIfam" id="TIGR00168">
    <property type="entry name" value="infC"/>
    <property type="match status" value="1"/>
</dbReference>
<dbReference type="PANTHER" id="PTHR10938">
    <property type="entry name" value="TRANSLATION INITIATION FACTOR IF-3"/>
    <property type="match status" value="1"/>
</dbReference>
<dbReference type="PANTHER" id="PTHR10938:SF0">
    <property type="entry name" value="TRANSLATION INITIATION FACTOR IF-3, MITOCHONDRIAL"/>
    <property type="match status" value="1"/>
</dbReference>
<dbReference type="Pfam" id="PF00707">
    <property type="entry name" value="IF3_C"/>
    <property type="match status" value="1"/>
</dbReference>
<dbReference type="Pfam" id="PF05198">
    <property type="entry name" value="IF3_N"/>
    <property type="match status" value="1"/>
</dbReference>
<dbReference type="SUPFAM" id="SSF55200">
    <property type="entry name" value="Translation initiation factor IF3, C-terminal domain"/>
    <property type="match status" value="1"/>
</dbReference>
<dbReference type="SUPFAM" id="SSF54364">
    <property type="entry name" value="Translation initiation factor IF3, N-terminal domain"/>
    <property type="match status" value="1"/>
</dbReference>
<dbReference type="PROSITE" id="PS00938">
    <property type="entry name" value="IF3"/>
    <property type="match status" value="1"/>
</dbReference>
<reference key="1">
    <citation type="journal article" date="2007" name="PLoS Genet.">
        <title>Patterns and implications of gene gain and loss in the evolution of Prochlorococcus.</title>
        <authorList>
            <person name="Kettler G.C."/>
            <person name="Martiny A.C."/>
            <person name="Huang K."/>
            <person name="Zucker J."/>
            <person name="Coleman M.L."/>
            <person name="Rodrigue S."/>
            <person name="Chen F."/>
            <person name="Lapidus A."/>
            <person name="Ferriera S."/>
            <person name="Johnson J."/>
            <person name="Steglich C."/>
            <person name="Church G.M."/>
            <person name="Richardson P."/>
            <person name="Chisholm S.W."/>
        </authorList>
    </citation>
    <scope>NUCLEOTIDE SEQUENCE [LARGE SCALE GENOMIC DNA]</scope>
    <source>
        <strain>NATL1A</strain>
    </source>
</reference>
<comment type="function">
    <text evidence="1">IF-3 binds to the 30S ribosomal subunit and shifts the equilibrium between 70S ribosomes and their 50S and 30S subunits in favor of the free subunits, thus enhancing the availability of 30S subunits on which protein synthesis initiation begins.</text>
</comment>
<comment type="subunit">
    <text evidence="1">Monomer.</text>
</comment>
<comment type="subcellular location">
    <subcellularLocation>
        <location evidence="1">Cytoplasm</location>
    </subcellularLocation>
</comment>
<comment type="similarity">
    <text evidence="1">Belongs to the IF-3 family.</text>
</comment>
<accession>A2C586</accession>
<proteinExistence type="inferred from homology"/>
<keyword id="KW-0963">Cytoplasm</keyword>
<keyword id="KW-0396">Initiation factor</keyword>
<keyword id="KW-0648">Protein biosynthesis</keyword>